<feature type="signal peptide" evidence="2">
    <location>
        <begin position="1"/>
        <end position="22"/>
    </location>
</feature>
<feature type="propeptide" id="PRO_0000401751" evidence="1">
    <location>
        <begin position="23"/>
        <end position="26"/>
    </location>
</feature>
<feature type="chain" id="PRO_0000401752" description="U7-lycotoxin-Ls1f">
    <location>
        <begin position="27"/>
        <end position="78"/>
    </location>
</feature>
<protein>
    <recommendedName>
        <fullName>U7-lycotoxin-Ls1f</fullName>
    </recommendedName>
    <alternativeName>
        <fullName>Toxin-like structure LSTX-G5</fullName>
    </alternativeName>
</protein>
<dbReference type="EMBL" id="EU926049">
    <property type="protein sequence ID" value="ACI41381.1"/>
    <property type="molecule type" value="mRNA"/>
</dbReference>
<dbReference type="EMBL" id="FM864053">
    <property type="protein sequence ID" value="CAS03650.1"/>
    <property type="molecule type" value="mRNA"/>
</dbReference>
<dbReference type="SMR" id="B6DCW5"/>
<dbReference type="ArachnoServer" id="AS000988">
    <property type="toxin name" value="U7-lycotoxin-Ls1f"/>
</dbReference>
<dbReference type="GO" id="GO:0005576">
    <property type="term" value="C:extracellular region"/>
    <property type="evidence" value="ECO:0007669"/>
    <property type="project" value="UniProtKB-SubCell"/>
</dbReference>
<dbReference type="GO" id="GO:0090729">
    <property type="term" value="F:toxin activity"/>
    <property type="evidence" value="ECO:0007669"/>
    <property type="project" value="UniProtKB-KW"/>
</dbReference>
<dbReference type="InterPro" id="IPR019553">
    <property type="entry name" value="Spider_toxin_CSTX_knottin"/>
</dbReference>
<dbReference type="Pfam" id="PF10530">
    <property type="entry name" value="Toxin_35"/>
    <property type="match status" value="1"/>
</dbReference>
<comment type="subcellular location">
    <subcellularLocation>
        <location evidence="1">Secreted</location>
    </subcellularLocation>
</comment>
<comment type="tissue specificity">
    <text>Expressed by the venom gland.</text>
</comment>
<comment type="PTM">
    <text evidence="1">Contains 4 disulfide bonds.</text>
</comment>
<comment type="similarity">
    <text evidence="3">Belongs to the neurotoxin 19 (CSTX) family. 07 (U7-Lctx) subfamily.</text>
</comment>
<keyword id="KW-1015">Disulfide bond</keyword>
<keyword id="KW-0964">Secreted</keyword>
<keyword id="KW-0732">Signal</keyword>
<keyword id="KW-0800">Toxin</keyword>
<name>TX705_LYCSI</name>
<accession>B6DCW5</accession>
<evidence type="ECO:0000250" key="1"/>
<evidence type="ECO:0000255" key="2"/>
<evidence type="ECO:0000305" key="3"/>
<proteinExistence type="evidence at transcript level"/>
<organism>
    <name type="scientific">Lycosa singoriensis</name>
    <name type="common">Wolf spider</name>
    <name type="synonym">Aranea singoriensis</name>
    <dbReference type="NCBI Taxonomy" id="434756"/>
    <lineage>
        <taxon>Eukaryota</taxon>
        <taxon>Metazoa</taxon>
        <taxon>Ecdysozoa</taxon>
        <taxon>Arthropoda</taxon>
        <taxon>Chelicerata</taxon>
        <taxon>Arachnida</taxon>
        <taxon>Araneae</taxon>
        <taxon>Araneomorphae</taxon>
        <taxon>Entelegynae</taxon>
        <taxon>Lycosoidea</taxon>
        <taxon>Lycosidae</taxon>
        <taxon>Lycosa</taxon>
    </lineage>
</organism>
<reference key="1">
    <citation type="journal article" date="2010" name="Zoology">
        <title>Transcriptome analysis of the venom glands of the Chinese wolf spider Lycosa singoriensis.</title>
        <authorList>
            <person name="Zhang Y."/>
            <person name="Chen J."/>
            <person name="Tang X."/>
            <person name="Wang F."/>
            <person name="Jiang L."/>
            <person name="Xiong X."/>
            <person name="Wang M."/>
            <person name="Rong M."/>
            <person name="Liu Z."/>
            <person name="Liang S."/>
        </authorList>
    </citation>
    <scope>NUCLEOTIDE SEQUENCE [LARGE SCALE MRNA]</scope>
    <source>
        <tissue>Venom gland</tissue>
    </source>
</reference>
<sequence length="78" mass="8711">MKLIIFTGLALLLIVSLIDVEAQNEGACLPRGSVCTTNHASCCSKLSCDCYRRFEKGVEKGQKCWRIPTGLRYSKEKE</sequence>